<feature type="chain" id="PRO_1000166836" description="Large ribosomal subunit protein uL6">
    <location>
        <begin position="1"/>
        <end position="178"/>
    </location>
</feature>
<proteinExistence type="inferred from homology"/>
<keyword id="KW-0687">Ribonucleoprotein</keyword>
<keyword id="KW-0689">Ribosomal protein</keyword>
<keyword id="KW-0694">RNA-binding</keyword>
<keyword id="KW-0699">rRNA-binding</keyword>
<gene>
    <name evidence="1" type="primary">rplF</name>
    <name type="ordered locus">SPT_0271</name>
</gene>
<organism>
    <name type="scientific">Streptococcus pneumoniae (strain Taiwan19F-14)</name>
    <dbReference type="NCBI Taxonomy" id="487213"/>
    <lineage>
        <taxon>Bacteria</taxon>
        <taxon>Bacillati</taxon>
        <taxon>Bacillota</taxon>
        <taxon>Bacilli</taxon>
        <taxon>Lactobacillales</taxon>
        <taxon>Streptococcaceae</taxon>
        <taxon>Streptococcus</taxon>
    </lineage>
</organism>
<dbReference type="EMBL" id="CP000921">
    <property type="protein sequence ID" value="ACO23084.1"/>
    <property type="molecule type" value="Genomic_DNA"/>
</dbReference>
<dbReference type="RefSeq" id="WP_000086633.1">
    <property type="nucleotide sequence ID" value="NC_012469.1"/>
</dbReference>
<dbReference type="SMR" id="C1CPA3"/>
<dbReference type="KEGG" id="snt:SPT_0271"/>
<dbReference type="HOGENOM" id="CLU_065464_1_2_9"/>
<dbReference type="GO" id="GO:0022625">
    <property type="term" value="C:cytosolic large ribosomal subunit"/>
    <property type="evidence" value="ECO:0007669"/>
    <property type="project" value="TreeGrafter"/>
</dbReference>
<dbReference type="GO" id="GO:0019843">
    <property type="term" value="F:rRNA binding"/>
    <property type="evidence" value="ECO:0007669"/>
    <property type="project" value="UniProtKB-UniRule"/>
</dbReference>
<dbReference type="GO" id="GO:0003735">
    <property type="term" value="F:structural constituent of ribosome"/>
    <property type="evidence" value="ECO:0007669"/>
    <property type="project" value="InterPro"/>
</dbReference>
<dbReference type="GO" id="GO:0002181">
    <property type="term" value="P:cytoplasmic translation"/>
    <property type="evidence" value="ECO:0007669"/>
    <property type="project" value="TreeGrafter"/>
</dbReference>
<dbReference type="FunFam" id="3.90.930.12:FF:000001">
    <property type="entry name" value="50S ribosomal protein L6"/>
    <property type="match status" value="1"/>
</dbReference>
<dbReference type="FunFam" id="3.90.930.12:FF:000002">
    <property type="entry name" value="50S ribosomal protein L6"/>
    <property type="match status" value="1"/>
</dbReference>
<dbReference type="Gene3D" id="3.90.930.12">
    <property type="entry name" value="Ribosomal protein L6, alpha-beta domain"/>
    <property type="match status" value="2"/>
</dbReference>
<dbReference type="HAMAP" id="MF_01365_B">
    <property type="entry name" value="Ribosomal_uL6_B"/>
    <property type="match status" value="1"/>
</dbReference>
<dbReference type="InterPro" id="IPR000702">
    <property type="entry name" value="Ribosomal_uL6-like"/>
</dbReference>
<dbReference type="InterPro" id="IPR036789">
    <property type="entry name" value="Ribosomal_uL6-like_a/b-dom_sf"/>
</dbReference>
<dbReference type="InterPro" id="IPR020040">
    <property type="entry name" value="Ribosomal_uL6_a/b-dom"/>
</dbReference>
<dbReference type="InterPro" id="IPR019906">
    <property type="entry name" value="Ribosomal_uL6_bac-type"/>
</dbReference>
<dbReference type="InterPro" id="IPR002358">
    <property type="entry name" value="Ribosomal_uL6_CS"/>
</dbReference>
<dbReference type="NCBIfam" id="TIGR03654">
    <property type="entry name" value="L6_bact"/>
    <property type="match status" value="1"/>
</dbReference>
<dbReference type="PANTHER" id="PTHR11655">
    <property type="entry name" value="60S/50S RIBOSOMAL PROTEIN L6/L9"/>
    <property type="match status" value="1"/>
</dbReference>
<dbReference type="PANTHER" id="PTHR11655:SF14">
    <property type="entry name" value="LARGE RIBOSOMAL SUBUNIT PROTEIN UL6M"/>
    <property type="match status" value="1"/>
</dbReference>
<dbReference type="Pfam" id="PF00347">
    <property type="entry name" value="Ribosomal_L6"/>
    <property type="match status" value="2"/>
</dbReference>
<dbReference type="PIRSF" id="PIRSF002162">
    <property type="entry name" value="Ribosomal_L6"/>
    <property type="match status" value="1"/>
</dbReference>
<dbReference type="PRINTS" id="PR00059">
    <property type="entry name" value="RIBOSOMALL6"/>
</dbReference>
<dbReference type="SUPFAM" id="SSF56053">
    <property type="entry name" value="Ribosomal protein L6"/>
    <property type="match status" value="2"/>
</dbReference>
<dbReference type="PROSITE" id="PS00525">
    <property type="entry name" value="RIBOSOMAL_L6_1"/>
    <property type="match status" value="1"/>
</dbReference>
<name>RL6_STRZT</name>
<comment type="function">
    <text evidence="1">This protein binds to the 23S rRNA, and is important in its secondary structure. It is located near the subunit interface in the base of the L7/L12 stalk, and near the tRNA binding site of the peptidyltransferase center.</text>
</comment>
<comment type="subunit">
    <text evidence="1">Part of the 50S ribosomal subunit.</text>
</comment>
<comment type="similarity">
    <text evidence="1">Belongs to the universal ribosomal protein uL6 family.</text>
</comment>
<accession>C1CPA3</accession>
<evidence type="ECO:0000255" key="1">
    <source>
        <dbReference type="HAMAP-Rule" id="MF_01365"/>
    </source>
</evidence>
<evidence type="ECO:0000305" key="2"/>
<reference key="1">
    <citation type="journal article" date="2010" name="Genome Biol.">
        <title>Structure and dynamics of the pan-genome of Streptococcus pneumoniae and closely related species.</title>
        <authorList>
            <person name="Donati C."/>
            <person name="Hiller N.L."/>
            <person name="Tettelin H."/>
            <person name="Muzzi A."/>
            <person name="Croucher N.J."/>
            <person name="Angiuoli S.V."/>
            <person name="Oggioni M."/>
            <person name="Dunning Hotopp J.C."/>
            <person name="Hu F.Z."/>
            <person name="Riley D.R."/>
            <person name="Covacci A."/>
            <person name="Mitchell T.J."/>
            <person name="Bentley S.D."/>
            <person name="Kilian M."/>
            <person name="Ehrlich G.D."/>
            <person name="Rappuoli R."/>
            <person name="Moxon E.R."/>
            <person name="Masignani V."/>
        </authorList>
    </citation>
    <scope>NUCLEOTIDE SEQUENCE [LARGE SCALE GENOMIC DNA]</scope>
    <source>
        <strain>Taiwan19F-14</strain>
    </source>
</reference>
<sequence>MSRIGNKVIVLPAGVELANNDNVVTVKGPKGELTREFSKDIEIRVEGTEVTLHRPNDSKEMKTIHGTTRALLNNMVVGVSEGFKKELEMRGVGYRAQLQGSKLVLAVGKSHPDEVEAPEGITFELPNPTTIVVSGISKEVVGQTAAYVRSLRSPEPYKGKGIRYVGEFVRRKEGKTGK</sequence>
<protein>
    <recommendedName>
        <fullName evidence="1">Large ribosomal subunit protein uL6</fullName>
    </recommendedName>
    <alternativeName>
        <fullName evidence="2">50S ribosomal protein L6</fullName>
    </alternativeName>
</protein>